<keyword id="KW-0488">Methylation</keyword>
<keyword id="KW-0687">Ribonucleoprotein</keyword>
<keyword id="KW-0689">Ribosomal protein</keyword>
<keyword id="KW-0694">RNA-binding</keyword>
<keyword id="KW-0699">rRNA-binding</keyword>
<keyword id="KW-0820">tRNA-binding</keyword>
<reference key="1">
    <citation type="journal article" date="2008" name="Mol. Biol. Evol.">
        <title>Genome evolution of Wolbachia strain wPip from the Culex pipiens group.</title>
        <authorList>
            <person name="Klasson L."/>
            <person name="Walker T."/>
            <person name="Sebaihia M."/>
            <person name="Sanders M.J."/>
            <person name="Quail M.A."/>
            <person name="Lord A."/>
            <person name="Sanders S."/>
            <person name="Earl J."/>
            <person name="O'Neill S.L."/>
            <person name="Thomson N."/>
            <person name="Sinkins S.P."/>
            <person name="Parkhill J."/>
        </authorList>
    </citation>
    <scope>NUCLEOTIDE SEQUENCE [LARGE SCALE GENOMIC DNA]</scope>
    <source>
        <strain>wPip</strain>
    </source>
</reference>
<organism>
    <name type="scientific">Wolbachia pipientis subsp. Culex pipiens (strain wPip)</name>
    <dbReference type="NCBI Taxonomy" id="570417"/>
    <lineage>
        <taxon>Bacteria</taxon>
        <taxon>Pseudomonadati</taxon>
        <taxon>Pseudomonadota</taxon>
        <taxon>Alphaproteobacteria</taxon>
        <taxon>Rickettsiales</taxon>
        <taxon>Anaplasmataceae</taxon>
        <taxon>Wolbachieae</taxon>
        <taxon>Wolbachia</taxon>
    </lineage>
</organism>
<feature type="chain" id="PRO_1000123537" description="Small ribosomal subunit protein uS12">
    <location>
        <begin position="1"/>
        <end position="124"/>
    </location>
</feature>
<feature type="modified residue" description="3-methylthioaspartic acid" evidence="1">
    <location>
        <position position="90"/>
    </location>
</feature>
<dbReference type="EMBL" id="AM999887">
    <property type="protein sequence ID" value="CAQ54672.1"/>
    <property type="molecule type" value="Genomic_DNA"/>
</dbReference>
<dbReference type="RefSeq" id="WP_010406837.1">
    <property type="nucleotide sequence ID" value="NC_010981.1"/>
</dbReference>
<dbReference type="SMR" id="B3CLA5"/>
<dbReference type="KEGG" id="wpi:WP0564"/>
<dbReference type="eggNOG" id="COG0048">
    <property type="taxonomic scope" value="Bacteria"/>
</dbReference>
<dbReference type="HOGENOM" id="CLU_104295_1_2_5"/>
<dbReference type="Proteomes" id="UP000008814">
    <property type="component" value="Chromosome"/>
</dbReference>
<dbReference type="GO" id="GO:0015935">
    <property type="term" value="C:small ribosomal subunit"/>
    <property type="evidence" value="ECO:0007669"/>
    <property type="project" value="InterPro"/>
</dbReference>
<dbReference type="GO" id="GO:0019843">
    <property type="term" value="F:rRNA binding"/>
    <property type="evidence" value="ECO:0007669"/>
    <property type="project" value="UniProtKB-UniRule"/>
</dbReference>
<dbReference type="GO" id="GO:0003735">
    <property type="term" value="F:structural constituent of ribosome"/>
    <property type="evidence" value="ECO:0007669"/>
    <property type="project" value="InterPro"/>
</dbReference>
<dbReference type="GO" id="GO:0000049">
    <property type="term" value="F:tRNA binding"/>
    <property type="evidence" value="ECO:0007669"/>
    <property type="project" value="UniProtKB-UniRule"/>
</dbReference>
<dbReference type="GO" id="GO:0006412">
    <property type="term" value="P:translation"/>
    <property type="evidence" value="ECO:0007669"/>
    <property type="project" value="UniProtKB-UniRule"/>
</dbReference>
<dbReference type="CDD" id="cd03368">
    <property type="entry name" value="Ribosomal_S12"/>
    <property type="match status" value="1"/>
</dbReference>
<dbReference type="FunFam" id="2.40.50.140:FF:000001">
    <property type="entry name" value="30S ribosomal protein S12"/>
    <property type="match status" value="1"/>
</dbReference>
<dbReference type="Gene3D" id="2.40.50.140">
    <property type="entry name" value="Nucleic acid-binding proteins"/>
    <property type="match status" value="1"/>
</dbReference>
<dbReference type="HAMAP" id="MF_00403_B">
    <property type="entry name" value="Ribosomal_uS12_B"/>
    <property type="match status" value="1"/>
</dbReference>
<dbReference type="InterPro" id="IPR012340">
    <property type="entry name" value="NA-bd_OB-fold"/>
</dbReference>
<dbReference type="InterPro" id="IPR006032">
    <property type="entry name" value="Ribosomal_uS12"/>
</dbReference>
<dbReference type="InterPro" id="IPR005679">
    <property type="entry name" value="Ribosomal_uS12_bac"/>
</dbReference>
<dbReference type="NCBIfam" id="TIGR00981">
    <property type="entry name" value="rpsL_bact"/>
    <property type="match status" value="1"/>
</dbReference>
<dbReference type="PANTHER" id="PTHR11652">
    <property type="entry name" value="30S RIBOSOMAL PROTEIN S12 FAMILY MEMBER"/>
    <property type="match status" value="1"/>
</dbReference>
<dbReference type="Pfam" id="PF00164">
    <property type="entry name" value="Ribosom_S12_S23"/>
    <property type="match status" value="1"/>
</dbReference>
<dbReference type="PIRSF" id="PIRSF002133">
    <property type="entry name" value="Ribosomal_S12/S23"/>
    <property type="match status" value="1"/>
</dbReference>
<dbReference type="PRINTS" id="PR01034">
    <property type="entry name" value="RIBOSOMALS12"/>
</dbReference>
<dbReference type="SUPFAM" id="SSF50249">
    <property type="entry name" value="Nucleic acid-binding proteins"/>
    <property type="match status" value="1"/>
</dbReference>
<dbReference type="PROSITE" id="PS00055">
    <property type="entry name" value="RIBOSOMAL_S12"/>
    <property type="match status" value="1"/>
</dbReference>
<comment type="function">
    <text evidence="2">With S4 and S5 plays an important role in translational accuracy.</text>
</comment>
<comment type="function">
    <text evidence="2">Interacts with and stabilizes bases of the 16S rRNA that are involved in tRNA selection in the A site and with the mRNA backbone. Located at the interface of the 30S and 50S subunits, it traverses the body of the 30S subunit contacting proteins on the other side and probably holding the rRNA structure together. The combined cluster of proteins S8, S12 and S17 appears to hold together the shoulder and platform of the 30S subunit.</text>
</comment>
<comment type="subunit">
    <text evidence="2">Part of the 30S ribosomal subunit. Contacts proteins S8 and S17. May interact with IF1 in the 30S initiation complex.</text>
</comment>
<comment type="similarity">
    <text evidence="2">Belongs to the universal ribosomal protein uS12 family.</text>
</comment>
<gene>
    <name evidence="2" type="primary">rpsL</name>
    <name type="ordered locus">WP0564</name>
</gene>
<evidence type="ECO:0000250" key="1"/>
<evidence type="ECO:0000255" key="2">
    <source>
        <dbReference type="HAMAP-Rule" id="MF_00403"/>
    </source>
</evidence>
<evidence type="ECO:0000305" key="3"/>
<proteinExistence type="inferred from homology"/>
<protein>
    <recommendedName>
        <fullName evidence="2">Small ribosomal subunit protein uS12</fullName>
    </recommendedName>
    <alternativeName>
        <fullName evidence="3">30S ribosomal protein S12</fullName>
    </alternativeName>
</protein>
<name>RS12_WOLPP</name>
<sequence>MPTINQLICKGRSGLTRKKKVPALGKCNPQRRGVCTKVYTTTPRKPNSALRKVARVKISGYGEVTAYIPGEGHNLQEHSVVLIRGGRVKDLPGVRYHIIRGALDLRGVQNRKKARSKYGVKKSG</sequence>
<accession>B3CLA5</accession>